<gene>
    <name type="primary">cry21Aa</name>
    <name type="synonym">cryXXIA(a)</name>
</gene>
<reference key="1">
    <citation type="patent" date="1996-12-31" number="US5589382">
        <title>Bacillus thuringiensis genes encoding nematode-active toxins.</title>
        <authorList>
            <person name="Payne J.M."/>
            <person name="Narva K.E."/>
            <person name="Fu J.M."/>
        </authorList>
    </citation>
    <scope>NUCLEOTIDE SEQUENCE [GENOMIC DNA]</scope>
    <source>
        <strain>NRRL B-18681 / PS167P</strain>
    </source>
</reference>
<reference key="2">
    <citation type="patent" date="1997-09-23" number="US5670365">
        <title>Identification of, and uses for, nematicidal Bacillus thuringiensis genes, toxins, and isolates.</title>
        <authorList>
            <person name="Feitelson J.S."/>
        </authorList>
    </citation>
    <scope>NUCLEOTIDE SEQUENCE [GENOMIC DNA]</scope>
    <source>
        <strain>NRRL B-21544 / PS178D4</strain>
    </source>
</reference>
<comment type="function">
    <text>Endotoxin with nematicidal activity.</text>
</comment>
<comment type="developmental stage">
    <text>The crystal protein is produced during sporulation and is accumulated both as an inclusion and as part of the spore coat.</text>
</comment>
<comment type="miscellaneous">
    <text>Toxic segment of the protein is located in the N-terminus.</text>
</comment>
<comment type="similarity">
    <text evidence="1">Belongs to the delta endotoxin family.</text>
</comment>
<name>C21AA_BACTU</name>
<proteinExistence type="evidence at transcript level"/>
<feature type="chain" id="PRO_0000174097" description="Pesticidal crystal protein Cry21Aa">
    <location>
        <begin position="1"/>
        <end position="1167"/>
    </location>
</feature>
<feature type="sequence variant" description="In strain: PS178D4.">
    <original>G</original>
    <variation>A</variation>
    <location>
        <position position="237"/>
    </location>
</feature>
<feature type="sequence variant" description="In strain: PS178D4.">
    <original>T</original>
    <variation>A</variation>
    <location>
        <position position="477"/>
    </location>
</feature>
<feature type="sequence variant" description="In strain: PS178D4.">
    <original>Q</original>
    <variation>K</variation>
    <location>
        <position position="586"/>
    </location>
</feature>
<feature type="sequence variant" description="In strain: PS178D4.">
    <original>ASD</original>
    <variation>HVT</variation>
    <location>
        <begin position="992"/>
        <end position="994"/>
    </location>
</feature>
<feature type="sequence variant" description="In strain: PS178D4.">
    <original>G</original>
    <variation>D</variation>
    <location>
        <position position="1016"/>
    </location>
</feature>
<feature type="sequence variant" description="In strain: PS178D4.">
    <original>L</original>
    <variation>F</variation>
    <location>
        <position position="1050"/>
    </location>
</feature>
<feature type="sequence conflict" description="In Ref. 2." evidence="1" ref="2">
    <original>GRHRIQTACTWKRQRNSYRSTWRKR</original>
    <variation>EDTEYKLRVRGKGKGTVTVQHGEEE</variation>
    <location>
        <begin position="1094"/>
        <end position="1118"/>
    </location>
</feature>
<keyword id="KW-0749">Sporulation</keyword>
<keyword id="KW-0800">Toxin</keyword>
<keyword id="KW-0843">Virulence</keyword>
<protein>
    <recommendedName>
        <fullName>Pesticidal crystal protein Cry21Aa</fullName>
    </recommendedName>
    <alternativeName>
        <fullName>132 kDa crystal protein</fullName>
    </alternativeName>
    <alternativeName>
        <fullName>Crystaline entomocidal protoxin</fullName>
    </alternativeName>
    <alternativeName>
        <fullName>Insecticidal delta-endotoxin CryXXIA(a)</fullName>
    </alternativeName>
</protein>
<organism>
    <name type="scientific">Bacillus thuringiensis</name>
    <dbReference type="NCBI Taxonomy" id="1428"/>
    <lineage>
        <taxon>Bacteria</taxon>
        <taxon>Bacillati</taxon>
        <taxon>Bacillota</taxon>
        <taxon>Bacilli</taxon>
        <taxon>Bacillales</taxon>
        <taxon>Bacillaceae</taxon>
        <taxon>Bacillus</taxon>
        <taxon>Bacillus cereus group</taxon>
    </lineage>
</organism>
<dbReference type="EMBL" id="I32932">
    <property type="status" value="NOT_ANNOTATED_CDS"/>
    <property type="molecule type" value="Unassigned_DNA"/>
</dbReference>
<dbReference type="EMBL" id="I66477">
    <property type="status" value="NOT_ANNOTATED_CDS"/>
    <property type="molecule type" value="Unassigned_DNA"/>
</dbReference>
<dbReference type="SMR" id="P56956"/>
<dbReference type="GO" id="GO:0090729">
    <property type="term" value="F:toxin activity"/>
    <property type="evidence" value="ECO:0007669"/>
    <property type="project" value="UniProtKB-KW"/>
</dbReference>
<dbReference type="GO" id="GO:0030435">
    <property type="term" value="P:sporulation resulting in formation of a cellular spore"/>
    <property type="evidence" value="ECO:0007669"/>
    <property type="project" value="UniProtKB-KW"/>
</dbReference>
<dbReference type="GO" id="GO:0001907">
    <property type="term" value="P:symbiont-mediated killing of host cell"/>
    <property type="evidence" value="ECO:0007669"/>
    <property type="project" value="InterPro"/>
</dbReference>
<dbReference type="CDD" id="cd04085">
    <property type="entry name" value="delta_endotoxin_C"/>
    <property type="match status" value="1"/>
</dbReference>
<dbReference type="Gene3D" id="2.100.10.40">
    <property type="match status" value="1"/>
</dbReference>
<dbReference type="Gene3D" id="2.60.120.260">
    <property type="entry name" value="Galactose-binding domain-like"/>
    <property type="match status" value="1"/>
</dbReference>
<dbReference type="Gene3D" id="1.20.190.10">
    <property type="entry name" value="Pesticidal crystal protein, N-terminal domain"/>
    <property type="match status" value="1"/>
</dbReference>
<dbReference type="InterPro" id="IPR041587">
    <property type="entry name" value="Cry_V"/>
</dbReference>
<dbReference type="InterPro" id="IPR008979">
    <property type="entry name" value="Galactose-bd-like_sf"/>
</dbReference>
<dbReference type="InterPro" id="IPR005638">
    <property type="entry name" value="Pest_crys_dom-III"/>
</dbReference>
<dbReference type="InterPro" id="IPR005639">
    <property type="entry name" value="Pest_crys_dom_I"/>
</dbReference>
<dbReference type="InterPro" id="IPR036716">
    <property type="entry name" value="Pest_crys_N_sf"/>
</dbReference>
<dbReference type="Pfam" id="PF17997">
    <property type="entry name" value="Cry1Ac_D5"/>
    <property type="match status" value="1"/>
</dbReference>
<dbReference type="Pfam" id="PF03944">
    <property type="entry name" value="Endotoxin_C"/>
    <property type="match status" value="1"/>
</dbReference>
<dbReference type="Pfam" id="PF03945">
    <property type="entry name" value="Endotoxin_N"/>
    <property type="match status" value="1"/>
</dbReference>
<dbReference type="SUPFAM" id="SSF56849">
    <property type="entry name" value="delta-Endotoxin (insectocide), N-terminal domain"/>
    <property type="match status" value="1"/>
</dbReference>
<dbReference type="SUPFAM" id="SSF49785">
    <property type="entry name" value="Galactose-binding domain-like"/>
    <property type="match status" value="1"/>
</dbReference>
<accession>P56956</accession>
<evidence type="ECO:0000305" key="1"/>
<sequence length="1167" mass="131658">MTNPTILYPSYHNVLAHPIRLDSFFDPFVETFKDLKGAWEEFGKTGYMDPLKQHLQIAWDTSQNGTVDYLALTKASISLIGLIPGADAVVPFINMFVDFIFPKLFGRGSQQNAQAQFFELIIEKVKELVDEDFRNFTLNNLLNYLDGMQTALSHFQNDVQIAICQGEQPGLMLDQTPTACTPTTDHLISVRESFKDARTTIETALPHFKNPMLSTNDNTPDFNSDTVLLTLPMYTTGATLNLILHQGYIQFAERWKSVNYDESFINQTKVDLQRRIQDYSTTVSTTFEKFKPTLNPSNKESVNKYNRYVRSMTLQSLDIAATWPTLDNVNYPSNVDIQLDQTRLVFSDVAGPWEGNDNITSNIIDVLTPINTGIGFQESSDLRKFTYPRIELQSMQFHGQYVNSKSVEHCYSDGLKLNYKNKTITAGVSNIDESNQNNKHNYGPVINSPITDINVNSQNSQYLDLNSVMVNGGQKVTGCSPLSSNGNSNNAALPNQKINVIYSVQSNDKPEKHADTYRKWGYMSSHIPYDLVPENVIGDIDPDTKQPSLLLKGFPAEKGYGDSIAYVSEPLNGANAVKLTSYQVLQMEVTNQTTQKYRIRIRYATGGDTAASIWFHIIGPSGNDLTNEGHNFSSVSSRNKMFVQGNNGKYVLNILTDSIELPSGQQTILIQNTNSQDLFLDRIEFISLPSTSTPTSTNFVEPESLEKIINQVNQLFSSSSQTELAHTVSDYKIDQVVLKVNALSDDVFGVEKKALRKLVNQAKQLSKARNVLVGGNFEKGHEWALSREATMVANHELFKGDHLLLPPPTLYPSYAYQKIDESKLKSNTRYTVSGFIAQSEHLEVVVSRYGKEVHDMLDIPYEEALPISSDESPNCCKPAACQCSSCDGSQSDSHFFSYSIDVGSLQSDVNLGIEFGLRIAKPNGFAKISNLEIKEDRPLTEKEIKKVQRKEQKWKKAFNQEQAEVATTLQPTLDQINALYQNEDWNGSVHPASDYQHLSAVVVPTLPKQRHWFMEGREGEHVVLTQQFQQALDRAFQQIEEQNLIHNGNLANGLTDWTVTGDAQLTIFDEDPVLELAHWDASISQTIEIMDFEGRHRIQTACTWKRQRNSYRSTWRKRLETMTFNTTSFTTQEQTFYFEGDTVDVHVQSENNTFLIDSVELIEIIEE</sequence>